<name>FABZ_FRAP2</name>
<sequence length="163" mass="18154">MSQFDEKNKHIDVMGIRKILPHRYPFALLDKIVDWSIEDRTIVAHKNVTINEDFFNGHFPEFPVMPGVLIVEAMAQATAILGELMAETLFAHVVAKAGGGRRTFMLAGIDKVRVKRPVVPGDVLVIESRMVKQKNIICTAESVAKVDGQIVCSAELMAAYKDY</sequence>
<dbReference type="EC" id="4.2.1.59" evidence="1"/>
<dbReference type="EMBL" id="CP000937">
    <property type="protein sequence ID" value="ABZ87424.1"/>
    <property type="molecule type" value="Genomic_DNA"/>
</dbReference>
<dbReference type="SMR" id="B0TXG6"/>
<dbReference type="KEGG" id="fph:Fphi_1199"/>
<dbReference type="eggNOG" id="COG0764">
    <property type="taxonomic scope" value="Bacteria"/>
</dbReference>
<dbReference type="HOGENOM" id="CLU_078912_1_2_6"/>
<dbReference type="GO" id="GO:0005737">
    <property type="term" value="C:cytoplasm"/>
    <property type="evidence" value="ECO:0007669"/>
    <property type="project" value="UniProtKB-SubCell"/>
</dbReference>
<dbReference type="GO" id="GO:0016020">
    <property type="term" value="C:membrane"/>
    <property type="evidence" value="ECO:0007669"/>
    <property type="project" value="GOC"/>
</dbReference>
<dbReference type="GO" id="GO:0019171">
    <property type="term" value="F:(3R)-hydroxyacyl-[acyl-carrier-protein] dehydratase activity"/>
    <property type="evidence" value="ECO:0007669"/>
    <property type="project" value="UniProtKB-EC"/>
</dbReference>
<dbReference type="GO" id="GO:0006633">
    <property type="term" value="P:fatty acid biosynthetic process"/>
    <property type="evidence" value="ECO:0007669"/>
    <property type="project" value="UniProtKB-UniRule"/>
</dbReference>
<dbReference type="GO" id="GO:0009245">
    <property type="term" value="P:lipid A biosynthetic process"/>
    <property type="evidence" value="ECO:0007669"/>
    <property type="project" value="UniProtKB-UniRule"/>
</dbReference>
<dbReference type="CDD" id="cd01288">
    <property type="entry name" value="FabZ"/>
    <property type="match status" value="1"/>
</dbReference>
<dbReference type="FunFam" id="3.10.129.10:FF:000001">
    <property type="entry name" value="3-hydroxyacyl-[acyl-carrier-protein] dehydratase FabZ"/>
    <property type="match status" value="1"/>
</dbReference>
<dbReference type="Gene3D" id="3.10.129.10">
    <property type="entry name" value="Hotdog Thioesterase"/>
    <property type="match status" value="1"/>
</dbReference>
<dbReference type="HAMAP" id="MF_00406">
    <property type="entry name" value="FabZ"/>
    <property type="match status" value="1"/>
</dbReference>
<dbReference type="InterPro" id="IPR013114">
    <property type="entry name" value="FabA_FabZ"/>
</dbReference>
<dbReference type="InterPro" id="IPR010084">
    <property type="entry name" value="FabZ"/>
</dbReference>
<dbReference type="InterPro" id="IPR029069">
    <property type="entry name" value="HotDog_dom_sf"/>
</dbReference>
<dbReference type="NCBIfam" id="TIGR01750">
    <property type="entry name" value="fabZ"/>
    <property type="match status" value="1"/>
</dbReference>
<dbReference type="NCBIfam" id="NF000582">
    <property type="entry name" value="PRK00006.1"/>
    <property type="match status" value="1"/>
</dbReference>
<dbReference type="PANTHER" id="PTHR30272">
    <property type="entry name" value="3-HYDROXYACYL-[ACYL-CARRIER-PROTEIN] DEHYDRATASE"/>
    <property type="match status" value="1"/>
</dbReference>
<dbReference type="PANTHER" id="PTHR30272:SF1">
    <property type="entry name" value="3-HYDROXYACYL-[ACYL-CARRIER-PROTEIN] DEHYDRATASE"/>
    <property type="match status" value="1"/>
</dbReference>
<dbReference type="Pfam" id="PF07977">
    <property type="entry name" value="FabA"/>
    <property type="match status" value="1"/>
</dbReference>
<dbReference type="SUPFAM" id="SSF54637">
    <property type="entry name" value="Thioesterase/thiol ester dehydrase-isomerase"/>
    <property type="match status" value="1"/>
</dbReference>
<gene>
    <name evidence="1" type="primary">fabZ</name>
    <name type="ordered locus">Fphi_1199</name>
</gene>
<reference key="1">
    <citation type="submission" date="2007-12" db="EMBL/GenBank/DDBJ databases">
        <title>Complete sequence of chromosome of Francisella philomiragia subsp. philomiragia ATCC 25017.</title>
        <authorList>
            <consortium name="US DOE Joint Genome Institute"/>
            <person name="Copeland A."/>
            <person name="Lucas S."/>
            <person name="Lapidus A."/>
            <person name="Barry K."/>
            <person name="Detter J.C."/>
            <person name="Glavina del Rio T."/>
            <person name="Hammon N."/>
            <person name="Israni S."/>
            <person name="Dalin E."/>
            <person name="Tice H."/>
            <person name="Pitluck S."/>
            <person name="Chain P."/>
            <person name="Malfatti S."/>
            <person name="Shin M."/>
            <person name="Vergez L."/>
            <person name="Schmutz J."/>
            <person name="Larimer F."/>
            <person name="Land M."/>
            <person name="Hauser L."/>
            <person name="Richardson P."/>
        </authorList>
    </citation>
    <scope>NUCLEOTIDE SEQUENCE [LARGE SCALE GENOMIC DNA]</scope>
    <source>
        <strain>ATCC 25017 / CCUG 19701 / FSC 153 / O#319-036</strain>
    </source>
</reference>
<protein>
    <recommendedName>
        <fullName evidence="1">3-hydroxyacyl-[acyl-carrier-protein] dehydratase FabZ</fullName>
        <ecNumber evidence="1">4.2.1.59</ecNumber>
    </recommendedName>
    <alternativeName>
        <fullName evidence="1">(3R)-hydroxymyristoyl-[acyl-carrier-protein] dehydratase</fullName>
        <shortName evidence="1">(3R)-hydroxymyristoyl-ACP dehydrase</shortName>
    </alternativeName>
    <alternativeName>
        <fullName evidence="1">Beta-hydroxyacyl-ACP dehydratase</fullName>
    </alternativeName>
</protein>
<keyword id="KW-0963">Cytoplasm</keyword>
<keyword id="KW-0441">Lipid A biosynthesis</keyword>
<keyword id="KW-0444">Lipid biosynthesis</keyword>
<keyword id="KW-0443">Lipid metabolism</keyword>
<keyword id="KW-0456">Lyase</keyword>
<accession>B0TXG6</accession>
<proteinExistence type="inferred from homology"/>
<feature type="chain" id="PRO_1000080439" description="3-hydroxyacyl-[acyl-carrier-protein] dehydratase FabZ">
    <location>
        <begin position="1"/>
        <end position="163"/>
    </location>
</feature>
<feature type="active site" evidence="1">
    <location>
        <position position="58"/>
    </location>
</feature>
<comment type="function">
    <text evidence="1">Involved in unsaturated fatty acids biosynthesis. Catalyzes the dehydration of short chain beta-hydroxyacyl-ACPs and long chain saturated and unsaturated beta-hydroxyacyl-ACPs.</text>
</comment>
<comment type="catalytic activity">
    <reaction evidence="1">
        <text>a (3R)-hydroxyacyl-[ACP] = a (2E)-enoyl-[ACP] + H2O</text>
        <dbReference type="Rhea" id="RHEA:13097"/>
        <dbReference type="Rhea" id="RHEA-COMP:9925"/>
        <dbReference type="Rhea" id="RHEA-COMP:9945"/>
        <dbReference type="ChEBI" id="CHEBI:15377"/>
        <dbReference type="ChEBI" id="CHEBI:78784"/>
        <dbReference type="ChEBI" id="CHEBI:78827"/>
        <dbReference type="EC" id="4.2.1.59"/>
    </reaction>
</comment>
<comment type="subcellular location">
    <subcellularLocation>
        <location evidence="1">Cytoplasm</location>
    </subcellularLocation>
</comment>
<comment type="similarity">
    <text evidence="1">Belongs to the thioester dehydratase family. FabZ subfamily.</text>
</comment>
<evidence type="ECO:0000255" key="1">
    <source>
        <dbReference type="HAMAP-Rule" id="MF_00406"/>
    </source>
</evidence>
<organism>
    <name type="scientific">Francisella philomiragia subsp. philomiragia (strain ATCC 25017 / CCUG 19701 / FSC 153 / O#319-036)</name>
    <dbReference type="NCBI Taxonomy" id="484022"/>
    <lineage>
        <taxon>Bacteria</taxon>
        <taxon>Pseudomonadati</taxon>
        <taxon>Pseudomonadota</taxon>
        <taxon>Gammaproteobacteria</taxon>
        <taxon>Thiotrichales</taxon>
        <taxon>Francisellaceae</taxon>
        <taxon>Francisella</taxon>
    </lineage>
</organism>